<gene>
    <name evidence="1" type="primary">iraP</name>
    <name type="ordered locus">Ent638_0853</name>
</gene>
<comment type="function">
    <text evidence="1">Inhibits RpoS proteolysis by regulating RssB activity, thereby increasing the stability of the sigma stress factor RpoS especially during phosphate starvation, but also in stationary phase and during nitrogen starvation. Its effect on RpoS stability is due to its interaction with RssB, which probably blocks the interaction of RssB with RpoS, and the consequent delivery of the RssB-RpoS complex to the ClpXP protein degradation pathway.</text>
</comment>
<comment type="subunit">
    <text evidence="1">Interacts with RssB.</text>
</comment>
<comment type="subcellular location">
    <subcellularLocation>
        <location evidence="1">Cytoplasm</location>
    </subcellularLocation>
</comment>
<comment type="similarity">
    <text evidence="1">Belongs to the IraP family.</text>
</comment>
<dbReference type="EMBL" id="CP000653">
    <property type="protein sequence ID" value="ABP59537.1"/>
    <property type="molecule type" value="Genomic_DNA"/>
</dbReference>
<dbReference type="RefSeq" id="WP_012016258.1">
    <property type="nucleotide sequence ID" value="NC_009436.1"/>
</dbReference>
<dbReference type="SMR" id="A4W757"/>
<dbReference type="STRING" id="399742.Ent638_0853"/>
<dbReference type="KEGG" id="ent:Ent638_0853"/>
<dbReference type="eggNOG" id="ENOG5032SF1">
    <property type="taxonomic scope" value="Bacteria"/>
</dbReference>
<dbReference type="HOGENOM" id="CLU_169517_0_0_6"/>
<dbReference type="OrthoDB" id="6548574at2"/>
<dbReference type="Proteomes" id="UP000000230">
    <property type="component" value="Chromosome"/>
</dbReference>
<dbReference type="GO" id="GO:0005737">
    <property type="term" value="C:cytoplasm"/>
    <property type="evidence" value="ECO:0007669"/>
    <property type="project" value="UniProtKB-SubCell"/>
</dbReference>
<dbReference type="GO" id="GO:0009267">
    <property type="term" value="P:cellular response to starvation"/>
    <property type="evidence" value="ECO:0007669"/>
    <property type="project" value="UniProtKB-UniRule"/>
</dbReference>
<dbReference type="HAMAP" id="MF_01198">
    <property type="entry name" value="Anti_adapt_IraP"/>
    <property type="match status" value="1"/>
</dbReference>
<dbReference type="InterPro" id="IPR019732">
    <property type="entry name" value="SigmaS_Anti-adapt_IraP"/>
</dbReference>
<dbReference type="NCBIfam" id="NF007598">
    <property type="entry name" value="PRK10244.1"/>
    <property type="match status" value="1"/>
</dbReference>
<dbReference type="Pfam" id="PF10796">
    <property type="entry name" value="Anti-adapt_IraP"/>
    <property type="match status" value="1"/>
</dbReference>
<accession>A4W757</accession>
<proteinExistence type="inferred from homology"/>
<reference key="1">
    <citation type="journal article" date="2010" name="PLoS Genet.">
        <title>Genome sequence of the plant growth promoting endophytic bacterium Enterobacter sp. 638.</title>
        <authorList>
            <person name="Taghavi S."/>
            <person name="van der Lelie D."/>
            <person name="Hoffman A."/>
            <person name="Zhang Y.B."/>
            <person name="Walla M.D."/>
            <person name="Vangronsveld J."/>
            <person name="Newman L."/>
            <person name="Monchy S."/>
        </authorList>
    </citation>
    <scope>NUCLEOTIDE SEQUENCE [LARGE SCALE GENOMIC DNA]</scope>
    <source>
        <strain>638</strain>
    </source>
</reference>
<sequence length="86" mass="9722">MKNLIAELLVKLAQKEEESKELVAQVEALEIVVTALLRQMAQTDQQALIQSIESALEDARPGSQVPVQDSEMLQQYVKKLLRHPRN</sequence>
<organism>
    <name type="scientific">Enterobacter sp. (strain 638)</name>
    <dbReference type="NCBI Taxonomy" id="399742"/>
    <lineage>
        <taxon>Bacteria</taxon>
        <taxon>Pseudomonadati</taxon>
        <taxon>Pseudomonadota</taxon>
        <taxon>Gammaproteobacteria</taxon>
        <taxon>Enterobacterales</taxon>
        <taxon>Enterobacteriaceae</taxon>
        <taxon>Enterobacter</taxon>
    </lineage>
</organism>
<feature type="chain" id="PRO_0000337849" description="Anti-adapter protein IraP">
    <location>
        <begin position="1"/>
        <end position="86"/>
    </location>
</feature>
<feature type="coiled-coil region" evidence="1">
    <location>
        <begin position="1"/>
        <end position="42"/>
    </location>
</feature>
<protein>
    <recommendedName>
        <fullName evidence="1">Anti-adapter protein IraP</fullName>
    </recommendedName>
</protein>
<evidence type="ECO:0000255" key="1">
    <source>
        <dbReference type="HAMAP-Rule" id="MF_01198"/>
    </source>
</evidence>
<keyword id="KW-0175">Coiled coil</keyword>
<keyword id="KW-0963">Cytoplasm</keyword>
<keyword id="KW-0346">Stress response</keyword>
<name>IRAP_ENT38</name>